<sequence>MKLDEIARLAGVSRTTASYVINGKAKQYRVSDKTVEKVMAVVREHNYHPNAVAAGLRAGRTRSIGLVIPDLENTSYTRIANYLERQARQRGYQLLIACSEDQPDNEMRCIEHLLQRQVDAIIVSTSLPPEHPFYQRWANDPFPIVALDRALDREHFTSVVGADQDDAEMLAEELRKFPAETVLYLGALPELSVSFLREQGFRTAWKDDPREVNFLYANSYEREAAAQLFEKWLETHPMPQALFTTSFALLQGVMDVTLRRDGKLPSDLAIATFGDHELLDFLQCPVLAVAQRHRDVAERVLEIVLASLDEPRKPKPGLTRIRRNLYRRGILSRS</sequence>
<organism>
    <name type="scientific">Salmonella typhimurium (strain LT2 / SGSC1412 / ATCC 700720)</name>
    <dbReference type="NCBI Taxonomy" id="99287"/>
    <lineage>
        <taxon>Bacteria</taxon>
        <taxon>Pseudomonadati</taxon>
        <taxon>Pseudomonadota</taxon>
        <taxon>Gammaproteobacteria</taxon>
        <taxon>Enterobacterales</taxon>
        <taxon>Enterobacteriaceae</taxon>
        <taxon>Salmonella</taxon>
    </lineage>
</organism>
<gene>
    <name type="primary">cra</name>
    <name type="synonym">fruR</name>
    <name type="ordered locus">STM0118</name>
</gene>
<feature type="chain" id="PRO_0000107950" description="Catabolite repressor/activator">
    <location>
        <begin position="1"/>
        <end position="334"/>
    </location>
</feature>
<feature type="domain" description="HTH lacI-type" evidence="2">
    <location>
        <begin position="1"/>
        <end position="58"/>
    </location>
</feature>
<feature type="DNA-binding region" description="H-T-H motif" evidence="2">
    <location>
        <begin position="3"/>
        <end position="22"/>
    </location>
</feature>
<dbReference type="EMBL" id="X55456">
    <property type="protein sequence ID" value="CAA39103.1"/>
    <property type="molecule type" value="Genomic_DNA"/>
</dbReference>
<dbReference type="EMBL" id="AF117227">
    <property type="protein sequence ID" value="AAF65176.1"/>
    <property type="molecule type" value="Genomic_DNA"/>
</dbReference>
<dbReference type="EMBL" id="AE006468">
    <property type="protein sequence ID" value="AAL19082.1"/>
    <property type="molecule type" value="Genomic_DNA"/>
</dbReference>
<dbReference type="PIR" id="S15941">
    <property type="entry name" value="S15941"/>
</dbReference>
<dbReference type="RefSeq" id="NP_459123.1">
    <property type="nucleotide sequence ID" value="NC_003197.2"/>
</dbReference>
<dbReference type="RefSeq" id="WP_000762406.1">
    <property type="nucleotide sequence ID" value="NC_003197.2"/>
</dbReference>
<dbReference type="SMR" id="P0A2P8"/>
<dbReference type="STRING" id="99287.STM0118"/>
<dbReference type="PaxDb" id="99287-STM0118"/>
<dbReference type="GeneID" id="1251636"/>
<dbReference type="KEGG" id="stm:STM0118"/>
<dbReference type="PATRIC" id="fig|99287.12.peg.124"/>
<dbReference type="HOGENOM" id="CLU_037628_6_0_6"/>
<dbReference type="OMA" id="NSRKAGY"/>
<dbReference type="PhylomeDB" id="P0A2P8"/>
<dbReference type="BioCyc" id="SENT99287:STM0118-MONOMER"/>
<dbReference type="PHI-base" id="PHI:2672"/>
<dbReference type="Proteomes" id="UP000001014">
    <property type="component" value="Chromosome"/>
</dbReference>
<dbReference type="GO" id="GO:0003700">
    <property type="term" value="F:DNA-binding transcription factor activity"/>
    <property type="evidence" value="ECO:0000318"/>
    <property type="project" value="GO_Central"/>
</dbReference>
<dbReference type="GO" id="GO:0000976">
    <property type="term" value="F:transcription cis-regulatory region binding"/>
    <property type="evidence" value="ECO:0000318"/>
    <property type="project" value="GO_Central"/>
</dbReference>
<dbReference type="GO" id="GO:0006355">
    <property type="term" value="P:regulation of DNA-templated transcription"/>
    <property type="evidence" value="ECO:0000318"/>
    <property type="project" value="GO_Central"/>
</dbReference>
<dbReference type="GO" id="GO:0009750">
    <property type="term" value="P:response to fructose"/>
    <property type="evidence" value="ECO:0007669"/>
    <property type="project" value="InterPro"/>
</dbReference>
<dbReference type="CDD" id="cd01392">
    <property type="entry name" value="HTH_LacI"/>
    <property type="match status" value="1"/>
</dbReference>
<dbReference type="CDD" id="cd06274">
    <property type="entry name" value="PBP1_FruR"/>
    <property type="match status" value="1"/>
</dbReference>
<dbReference type="FunFam" id="1.10.260.40:FF:000008">
    <property type="entry name" value="Fructose repressor (Catabolite repressor/activator)"/>
    <property type="match status" value="1"/>
</dbReference>
<dbReference type="FunFam" id="3.40.50.2300:FF:000022">
    <property type="entry name" value="Fructose repressor (Catabolite repressor/activator)"/>
    <property type="match status" value="1"/>
</dbReference>
<dbReference type="FunFam" id="3.40.50.2300:FF:000049">
    <property type="entry name" value="Fructose repressor FruR"/>
    <property type="match status" value="1"/>
</dbReference>
<dbReference type="Gene3D" id="3.40.50.2300">
    <property type="match status" value="2"/>
</dbReference>
<dbReference type="Gene3D" id="1.10.260.40">
    <property type="entry name" value="lambda repressor-like DNA-binding domains"/>
    <property type="match status" value="1"/>
</dbReference>
<dbReference type="InterPro" id="IPR012781">
    <property type="entry name" value="Fruct_sucro_rep"/>
</dbReference>
<dbReference type="InterPro" id="IPR000843">
    <property type="entry name" value="HTH_LacI"/>
</dbReference>
<dbReference type="InterPro" id="IPR010982">
    <property type="entry name" value="Lambda_DNA-bd_dom_sf"/>
</dbReference>
<dbReference type="InterPro" id="IPR001761">
    <property type="entry name" value="Peripla_BP/Lac1_sug-bd_dom"/>
</dbReference>
<dbReference type="InterPro" id="IPR028082">
    <property type="entry name" value="Peripla_BP_I"/>
</dbReference>
<dbReference type="NCBIfam" id="TIGR02417">
    <property type="entry name" value="fruct_sucro_rep"/>
    <property type="match status" value="1"/>
</dbReference>
<dbReference type="NCBIfam" id="NF008452">
    <property type="entry name" value="PRK11303.1"/>
    <property type="match status" value="1"/>
</dbReference>
<dbReference type="PANTHER" id="PTHR30146:SF45">
    <property type="entry name" value="CATABOLITE REPRESSOR_ACTIVATOR"/>
    <property type="match status" value="1"/>
</dbReference>
<dbReference type="PANTHER" id="PTHR30146">
    <property type="entry name" value="LACI-RELATED TRANSCRIPTIONAL REPRESSOR"/>
    <property type="match status" value="1"/>
</dbReference>
<dbReference type="Pfam" id="PF00356">
    <property type="entry name" value="LacI"/>
    <property type="match status" value="1"/>
</dbReference>
<dbReference type="Pfam" id="PF00532">
    <property type="entry name" value="Peripla_BP_1"/>
    <property type="match status" value="1"/>
</dbReference>
<dbReference type="SMART" id="SM00354">
    <property type="entry name" value="HTH_LACI"/>
    <property type="match status" value="1"/>
</dbReference>
<dbReference type="SUPFAM" id="SSF47413">
    <property type="entry name" value="lambda repressor-like DNA-binding domains"/>
    <property type="match status" value="1"/>
</dbReference>
<dbReference type="SUPFAM" id="SSF53822">
    <property type="entry name" value="Periplasmic binding protein-like I"/>
    <property type="match status" value="1"/>
</dbReference>
<dbReference type="PROSITE" id="PS00356">
    <property type="entry name" value="HTH_LACI_1"/>
    <property type="match status" value="1"/>
</dbReference>
<dbReference type="PROSITE" id="PS50932">
    <property type="entry name" value="HTH_LACI_2"/>
    <property type="match status" value="1"/>
</dbReference>
<comment type="function">
    <text evidence="1">Global transcriptional regulator, which plays an important role in the regulation of carbon metabolism.</text>
</comment>
<comment type="subunit">
    <text evidence="1">Homotetramer.</text>
</comment>
<comment type="disruption phenotype">
    <text evidence="3">Decreases expression of genes encoding virulence proteins (PubMed:19229334). Decreases virulence in mouse (PubMed:19229334).</text>
</comment>
<accession>P0A2P8</accession>
<accession>P21930</accession>
<protein>
    <recommendedName>
        <fullName>Catabolite repressor/activator</fullName>
    </recommendedName>
    <alternativeName>
        <fullName>Fructose repressor</fullName>
    </alternativeName>
</protein>
<evidence type="ECO:0000250" key="1"/>
<evidence type="ECO:0000255" key="2">
    <source>
        <dbReference type="PROSITE-ProRule" id="PRU00111"/>
    </source>
</evidence>
<evidence type="ECO:0000269" key="3">
    <source>
    </source>
</evidence>
<evidence type="ECO:0000303" key="4">
    <source>
    </source>
</evidence>
<name>CRA_SALTY</name>
<reference key="1">
    <citation type="journal article" date="1991" name="Mol. Gen. Genet.">
        <title>Nucleotide sequence of the ilvH-fruR gene region of Escherichia coli K12 and Salmonella typhimurium LT2.</title>
        <authorList>
            <person name="Jahreis K."/>
            <person name="Postma P.W."/>
            <person name="Lengeler J.W."/>
        </authorList>
    </citation>
    <scope>NUCLEOTIDE SEQUENCE [GENOMIC DNA]</scope>
    <source>
        <strain>LT2</strain>
    </source>
</reference>
<reference key="2">
    <citation type="journal article" date="1991" name="Res. Microbiol.">
        <title>Sequence and evolution of the FruR protein of Salmonella typhimurium: a pleiotropic transcriptional regulatory protein possessing both activator and repressor functions which is homologous to the periplasmic ribose-binding protein.</title>
        <authorList>
            <person name="Vartak N.B."/>
            <person name="Reizer J."/>
            <person name="Reizer A."/>
            <person name="Gripp J.T."/>
            <person name="Groisman E.A."/>
            <person name="Wu L.-F."/>
            <person name="Tomich J.M."/>
            <person name="Saier M.H. Jr."/>
        </authorList>
    </citation>
    <scope>NUCLEOTIDE SEQUENCE [GENOMIC DNA]</scope>
    <source>
        <strain>ATCC 14028 / SGSG 2980 / CDC 6516-60 / NCTC 12023</strain>
    </source>
</reference>
<reference key="3">
    <citation type="journal article" date="2000" name="Mol. Microbiol.">
        <title>Activation and silencing of leu-500 promoter by transcription-induced DNA supercoiling in the Salmonella chromosome.</title>
        <authorList>
            <person name="El Hanafi D."/>
            <person name="Bossi L."/>
        </authorList>
    </citation>
    <scope>NUCLEOTIDE SEQUENCE [GENOMIC DNA]</scope>
    <source>
        <strain>LT2</strain>
    </source>
</reference>
<reference key="4">
    <citation type="journal article" date="2001" name="Nature">
        <title>Complete genome sequence of Salmonella enterica serovar Typhimurium LT2.</title>
        <authorList>
            <person name="McClelland M."/>
            <person name="Sanderson K.E."/>
            <person name="Spieth J."/>
            <person name="Clifton S.W."/>
            <person name="Latreille P."/>
            <person name="Courtney L."/>
            <person name="Porwollik S."/>
            <person name="Ali J."/>
            <person name="Dante M."/>
            <person name="Du F."/>
            <person name="Hou S."/>
            <person name="Layman D."/>
            <person name="Leonard S."/>
            <person name="Nguyen C."/>
            <person name="Scott K."/>
            <person name="Holmes A."/>
            <person name="Grewal N."/>
            <person name="Mulvaney E."/>
            <person name="Ryan E."/>
            <person name="Sun H."/>
            <person name="Florea L."/>
            <person name="Miller W."/>
            <person name="Stoneking T."/>
            <person name="Nhan M."/>
            <person name="Waterston R."/>
            <person name="Wilson R.K."/>
        </authorList>
    </citation>
    <scope>NUCLEOTIDE SEQUENCE [LARGE SCALE GENOMIC DNA]</scope>
    <source>
        <strain>LT2 / SGSC1412 / ATCC 700720</strain>
    </source>
</reference>
<reference key="5">
    <citation type="journal article" date="2009" name="PLoS Pathog.">
        <title>Coordinated regulation of virulence during systemic infection of Salmonella enterica serovar Typhimurium.</title>
        <authorList>
            <person name="Yoon H."/>
            <person name="McDermott J.E."/>
            <person name="Porwollik S."/>
            <person name="McClelland M."/>
            <person name="Heffron F."/>
        </authorList>
    </citation>
    <scope>DISRUPTION PHENOTYPE</scope>
    <source>
        <strain evidence="4">14028s / SGSC 2262</strain>
    </source>
</reference>
<proteinExistence type="inferred from homology"/>
<keyword id="KW-0010">Activator</keyword>
<keyword id="KW-0238">DNA-binding</keyword>
<keyword id="KW-1185">Reference proteome</keyword>
<keyword id="KW-0678">Repressor</keyword>
<keyword id="KW-0804">Transcription</keyword>
<keyword id="KW-0805">Transcription regulation</keyword>